<comment type="subcellular location">
    <subcellularLocation>
        <location evidence="1">Spore core</location>
    </subcellularLocation>
</comment>
<comment type="induction">
    <text evidence="1">Expressed only in the forespore compartment of sporulating cells.</text>
</comment>
<comment type="similarity">
    <text evidence="1">Belongs to the SspO family.</text>
</comment>
<dbReference type="EMBL" id="AE017333">
    <property type="protein sequence ID" value="AAU40936.1"/>
    <property type="molecule type" value="Genomic_DNA"/>
</dbReference>
<dbReference type="EMBL" id="CP000002">
    <property type="protein sequence ID" value="AAU23574.1"/>
    <property type="molecule type" value="Genomic_DNA"/>
</dbReference>
<dbReference type="RefSeq" id="WP_003182252.1">
    <property type="nucleotide sequence ID" value="NC_006322.1"/>
</dbReference>
<dbReference type="STRING" id="279010.BL05191"/>
<dbReference type="GeneID" id="92861363"/>
<dbReference type="KEGG" id="bld:BLi02046"/>
<dbReference type="KEGG" id="bli:BL05191"/>
<dbReference type="HOGENOM" id="CLU_206342_0_0_9"/>
<dbReference type="Proteomes" id="UP000000606">
    <property type="component" value="Chromosome"/>
</dbReference>
<dbReference type="GO" id="GO:0042601">
    <property type="term" value="C:endospore-forming forespore"/>
    <property type="evidence" value="ECO:0007669"/>
    <property type="project" value="InterPro"/>
</dbReference>
<dbReference type="GO" id="GO:0030436">
    <property type="term" value="P:asexual sporulation"/>
    <property type="evidence" value="ECO:0007669"/>
    <property type="project" value="UniProtKB-UniRule"/>
</dbReference>
<dbReference type="GO" id="GO:0030435">
    <property type="term" value="P:sporulation resulting in formation of a cellular spore"/>
    <property type="evidence" value="ECO:0007669"/>
    <property type="project" value="UniProtKB-KW"/>
</dbReference>
<dbReference type="HAMAP" id="MF_00665">
    <property type="entry name" value="SspO"/>
    <property type="match status" value="1"/>
</dbReference>
<dbReference type="InterPro" id="IPR012613">
    <property type="entry name" value="SASP_SspO"/>
</dbReference>
<dbReference type="NCBIfam" id="TIGR02864">
    <property type="entry name" value="spore_sspO"/>
    <property type="match status" value="1"/>
</dbReference>
<dbReference type="Pfam" id="PF08175">
    <property type="entry name" value="SspO"/>
    <property type="match status" value="1"/>
</dbReference>
<protein>
    <recommendedName>
        <fullName evidence="1">Small, acid-soluble spore protein O</fullName>
        <shortName evidence="1">SASP O</shortName>
    </recommendedName>
</protein>
<organism>
    <name type="scientific">Bacillus licheniformis (strain ATCC 14580 / DSM 13 / JCM 2505 / CCUG 7422 / NBRC 12200 / NCIMB 9375 / NCTC 10341 / NRRL NRS-1264 / Gibson 46)</name>
    <dbReference type="NCBI Taxonomy" id="279010"/>
    <lineage>
        <taxon>Bacteria</taxon>
        <taxon>Bacillati</taxon>
        <taxon>Bacillota</taxon>
        <taxon>Bacilli</taxon>
        <taxon>Bacillales</taxon>
        <taxon>Bacillaceae</taxon>
        <taxon>Bacillus</taxon>
    </lineage>
</organism>
<proteinExistence type="inferred from homology"/>
<evidence type="ECO:0000255" key="1">
    <source>
        <dbReference type="HAMAP-Rule" id="MF_00665"/>
    </source>
</evidence>
<evidence type="ECO:0000256" key="2">
    <source>
        <dbReference type="SAM" id="MobiDB-lite"/>
    </source>
</evidence>
<reference key="1">
    <citation type="journal article" date="2004" name="J. Mol. Microbiol. Biotechnol.">
        <title>The complete genome sequence of Bacillus licheniformis DSM13, an organism with great industrial potential.</title>
        <authorList>
            <person name="Veith B."/>
            <person name="Herzberg C."/>
            <person name="Steckel S."/>
            <person name="Feesche J."/>
            <person name="Maurer K.H."/>
            <person name="Ehrenreich P."/>
            <person name="Baeumer S."/>
            <person name="Henne A."/>
            <person name="Liesegang H."/>
            <person name="Merkl R."/>
            <person name="Ehrenreich A."/>
            <person name="Gottschalk G."/>
        </authorList>
    </citation>
    <scope>NUCLEOTIDE SEQUENCE [LARGE SCALE GENOMIC DNA]</scope>
    <source>
        <strain>ATCC 14580 / DSM 13 / JCM 2505 / CCUG 7422 / NBRC 12200 / NCIMB 9375 / NCTC 10341 / NRRL NRS-1264 / Gibson 46</strain>
    </source>
</reference>
<reference key="2">
    <citation type="journal article" date="2004" name="Genome Biol.">
        <title>Complete genome sequence of the industrial bacterium Bacillus licheniformis and comparisons with closely related Bacillus species.</title>
        <authorList>
            <person name="Rey M.W."/>
            <person name="Ramaiya P."/>
            <person name="Nelson B.A."/>
            <person name="Brody-Karpin S.D."/>
            <person name="Zaretsky E.J."/>
            <person name="Tang M."/>
            <person name="Lopez de Leon A."/>
            <person name="Xiang H."/>
            <person name="Gusti V."/>
            <person name="Clausen I.G."/>
            <person name="Olsen P.B."/>
            <person name="Rasmussen M.D."/>
            <person name="Andersen J.T."/>
            <person name="Joergensen P.L."/>
            <person name="Larsen T.S."/>
            <person name="Sorokin A."/>
            <person name="Bolotin A."/>
            <person name="Lapidus A."/>
            <person name="Galleron N."/>
            <person name="Ehrlich S.D."/>
            <person name="Berka R.M."/>
        </authorList>
    </citation>
    <scope>NUCLEOTIDE SEQUENCE [LARGE SCALE GENOMIC DNA]</scope>
    <source>
        <strain>ATCC 14580 / DSM 13 / JCM 2505 / CCUG 7422 / NBRC 12200 / NCIMB 9375 / NCTC 10341 / NRRL NRS-1264 / Gibson 46</strain>
    </source>
</reference>
<sequence length="48" mass="5491">MAKRKANHVINGMNNAKRQGNGAGYIENDQHILTEAERQNNKKRKTNQ</sequence>
<feature type="chain" id="PRO_0000217207" description="Small, acid-soluble spore protein O">
    <location>
        <begin position="1"/>
        <end position="48"/>
    </location>
</feature>
<feature type="region of interest" description="Disordered" evidence="2">
    <location>
        <begin position="1"/>
        <end position="48"/>
    </location>
</feature>
<feature type="compositionally biased region" description="Basic and acidic residues" evidence="2">
    <location>
        <begin position="28"/>
        <end position="40"/>
    </location>
</feature>
<accession>Q65J28</accession>
<accession>Q62UI5</accession>
<keyword id="KW-1185">Reference proteome</keyword>
<keyword id="KW-0749">Sporulation</keyword>
<gene>
    <name evidence="1" type="primary">sspO</name>
    <name type="ordered locus">BLi02046</name>
    <name type="ordered locus">BL05191</name>
</gene>
<name>SSPO_BACLD</name>